<keyword id="KW-0378">Hydrolase</keyword>
<keyword id="KW-0479">Metal-binding</keyword>
<keyword id="KW-0546">Nucleotide metabolism</keyword>
<keyword id="KW-0862">Zinc</keyword>
<feature type="chain" id="PRO_1000017671" description="Adenosine deaminase">
    <location>
        <begin position="1"/>
        <end position="362"/>
    </location>
</feature>
<feature type="active site" description="Proton donor" evidence="1">
    <location>
        <position position="211"/>
    </location>
</feature>
<feature type="binding site" evidence="1">
    <location>
        <position position="19"/>
    </location>
    <ligand>
        <name>Zn(2+)</name>
        <dbReference type="ChEBI" id="CHEBI:29105"/>
        <note>catalytic</note>
    </ligand>
</feature>
<feature type="binding site" evidence="1">
    <location>
        <position position="21"/>
    </location>
    <ligand>
        <name>substrate</name>
    </ligand>
</feature>
<feature type="binding site" evidence="1">
    <location>
        <position position="21"/>
    </location>
    <ligand>
        <name>Zn(2+)</name>
        <dbReference type="ChEBI" id="CHEBI:29105"/>
        <note>catalytic</note>
    </ligand>
</feature>
<feature type="binding site" evidence="1">
    <location>
        <position position="23"/>
    </location>
    <ligand>
        <name>substrate</name>
    </ligand>
</feature>
<feature type="binding site" evidence="1">
    <location>
        <position position="181"/>
    </location>
    <ligand>
        <name>substrate</name>
    </ligand>
</feature>
<feature type="binding site" evidence="1">
    <location>
        <position position="208"/>
    </location>
    <ligand>
        <name>Zn(2+)</name>
        <dbReference type="ChEBI" id="CHEBI:29105"/>
        <note>catalytic</note>
    </ligand>
</feature>
<feature type="binding site" evidence="1">
    <location>
        <position position="300"/>
    </location>
    <ligand>
        <name>Zn(2+)</name>
        <dbReference type="ChEBI" id="CHEBI:29105"/>
        <note>catalytic</note>
    </ligand>
</feature>
<feature type="site" description="Important for catalytic activity" evidence="1">
    <location>
        <position position="232"/>
    </location>
</feature>
<name>ADD_MYCSK</name>
<dbReference type="EC" id="3.5.4.4" evidence="1"/>
<dbReference type="EMBL" id="CP000518">
    <property type="protein sequence ID" value="ABL90462.1"/>
    <property type="molecule type" value="Genomic_DNA"/>
</dbReference>
<dbReference type="SMR" id="A1UCA4"/>
<dbReference type="STRING" id="189918.Mkms_1250"/>
<dbReference type="KEGG" id="mkm:Mkms_1250"/>
<dbReference type="HOGENOM" id="CLU_039228_0_0_11"/>
<dbReference type="OrthoDB" id="9779574at2"/>
<dbReference type="GO" id="GO:0005829">
    <property type="term" value="C:cytosol"/>
    <property type="evidence" value="ECO:0007669"/>
    <property type="project" value="TreeGrafter"/>
</dbReference>
<dbReference type="GO" id="GO:0046936">
    <property type="term" value="F:2'-deoxyadenosine deaminase activity"/>
    <property type="evidence" value="ECO:0007669"/>
    <property type="project" value="RHEA"/>
</dbReference>
<dbReference type="GO" id="GO:0004000">
    <property type="term" value="F:adenosine deaminase activity"/>
    <property type="evidence" value="ECO:0007669"/>
    <property type="project" value="UniProtKB-UniRule"/>
</dbReference>
<dbReference type="GO" id="GO:0008270">
    <property type="term" value="F:zinc ion binding"/>
    <property type="evidence" value="ECO:0007669"/>
    <property type="project" value="UniProtKB-UniRule"/>
</dbReference>
<dbReference type="GO" id="GO:0006154">
    <property type="term" value="P:adenosine catabolic process"/>
    <property type="evidence" value="ECO:0007669"/>
    <property type="project" value="TreeGrafter"/>
</dbReference>
<dbReference type="GO" id="GO:0043103">
    <property type="term" value="P:hypoxanthine salvage"/>
    <property type="evidence" value="ECO:0007669"/>
    <property type="project" value="TreeGrafter"/>
</dbReference>
<dbReference type="GO" id="GO:0046103">
    <property type="term" value="P:inosine biosynthetic process"/>
    <property type="evidence" value="ECO:0007669"/>
    <property type="project" value="TreeGrafter"/>
</dbReference>
<dbReference type="GO" id="GO:0009117">
    <property type="term" value="P:nucleotide metabolic process"/>
    <property type="evidence" value="ECO:0007669"/>
    <property type="project" value="UniProtKB-KW"/>
</dbReference>
<dbReference type="GO" id="GO:0009168">
    <property type="term" value="P:purine ribonucleoside monophosphate biosynthetic process"/>
    <property type="evidence" value="ECO:0007669"/>
    <property type="project" value="UniProtKB-UniRule"/>
</dbReference>
<dbReference type="FunFam" id="3.20.20.140:FF:000020">
    <property type="entry name" value="Adenosine deaminase"/>
    <property type="match status" value="1"/>
</dbReference>
<dbReference type="Gene3D" id="3.20.20.140">
    <property type="entry name" value="Metal-dependent hydrolases"/>
    <property type="match status" value="1"/>
</dbReference>
<dbReference type="HAMAP" id="MF_00540">
    <property type="entry name" value="A_deaminase"/>
    <property type="match status" value="1"/>
</dbReference>
<dbReference type="InterPro" id="IPR028893">
    <property type="entry name" value="A_deaminase"/>
</dbReference>
<dbReference type="InterPro" id="IPR001365">
    <property type="entry name" value="A_deaminase_dom"/>
</dbReference>
<dbReference type="InterPro" id="IPR006330">
    <property type="entry name" value="Ado/ade_deaminase"/>
</dbReference>
<dbReference type="InterPro" id="IPR032466">
    <property type="entry name" value="Metal_Hydrolase"/>
</dbReference>
<dbReference type="NCBIfam" id="TIGR01430">
    <property type="entry name" value="aden_deam"/>
    <property type="match status" value="1"/>
</dbReference>
<dbReference type="NCBIfam" id="NF006847">
    <property type="entry name" value="PRK09358.1-2"/>
    <property type="match status" value="1"/>
</dbReference>
<dbReference type="PANTHER" id="PTHR11409">
    <property type="entry name" value="ADENOSINE DEAMINASE"/>
    <property type="match status" value="1"/>
</dbReference>
<dbReference type="PANTHER" id="PTHR11409:SF43">
    <property type="entry name" value="ADENOSINE DEAMINASE"/>
    <property type="match status" value="1"/>
</dbReference>
<dbReference type="Pfam" id="PF00962">
    <property type="entry name" value="A_deaminase"/>
    <property type="match status" value="1"/>
</dbReference>
<dbReference type="SUPFAM" id="SSF51556">
    <property type="entry name" value="Metallo-dependent hydrolases"/>
    <property type="match status" value="1"/>
</dbReference>
<gene>
    <name evidence="1" type="primary">add</name>
    <name type="ordered locus">Mkms_1250</name>
</gene>
<proteinExistence type="inferred from homology"/>
<comment type="function">
    <text evidence="1">Catalyzes the hydrolytic deamination of adenosine and 2-deoxyadenosine.</text>
</comment>
<comment type="catalytic activity">
    <reaction evidence="1">
        <text>adenosine + H2O + H(+) = inosine + NH4(+)</text>
        <dbReference type="Rhea" id="RHEA:24408"/>
        <dbReference type="ChEBI" id="CHEBI:15377"/>
        <dbReference type="ChEBI" id="CHEBI:15378"/>
        <dbReference type="ChEBI" id="CHEBI:16335"/>
        <dbReference type="ChEBI" id="CHEBI:17596"/>
        <dbReference type="ChEBI" id="CHEBI:28938"/>
        <dbReference type="EC" id="3.5.4.4"/>
    </reaction>
    <physiologicalReaction direction="left-to-right" evidence="1">
        <dbReference type="Rhea" id="RHEA:24409"/>
    </physiologicalReaction>
</comment>
<comment type="catalytic activity">
    <reaction evidence="1">
        <text>2'-deoxyadenosine + H2O + H(+) = 2'-deoxyinosine + NH4(+)</text>
        <dbReference type="Rhea" id="RHEA:28190"/>
        <dbReference type="ChEBI" id="CHEBI:15377"/>
        <dbReference type="ChEBI" id="CHEBI:15378"/>
        <dbReference type="ChEBI" id="CHEBI:17256"/>
        <dbReference type="ChEBI" id="CHEBI:28938"/>
        <dbReference type="ChEBI" id="CHEBI:28997"/>
        <dbReference type="EC" id="3.5.4.4"/>
    </reaction>
    <physiologicalReaction direction="left-to-right" evidence="1">
        <dbReference type="Rhea" id="RHEA:28191"/>
    </physiologicalReaction>
</comment>
<comment type="cofactor">
    <cofactor evidence="1">
        <name>Zn(2+)</name>
        <dbReference type="ChEBI" id="CHEBI:29105"/>
    </cofactor>
    <text evidence="1">Binds 1 zinc ion per subunit.</text>
</comment>
<comment type="similarity">
    <text evidence="1">Belongs to the metallo-dependent hydrolases superfamily. Adenosine and AMP deaminases family. Adenosine deaminase subfamily.</text>
</comment>
<reference key="1">
    <citation type="submission" date="2006-12" db="EMBL/GenBank/DDBJ databases">
        <title>Complete sequence of chromosome of Mycobacterium sp. KMS.</title>
        <authorList>
            <consortium name="US DOE Joint Genome Institute"/>
            <person name="Copeland A."/>
            <person name="Lucas S."/>
            <person name="Lapidus A."/>
            <person name="Barry K."/>
            <person name="Detter J.C."/>
            <person name="Glavina del Rio T."/>
            <person name="Hammon N."/>
            <person name="Israni S."/>
            <person name="Dalin E."/>
            <person name="Tice H."/>
            <person name="Pitluck S."/>
            <person name="Kiss H."/>
            <person name="Brettin T."/>
            <person name="Bruce D."/>
            <person name="Han C."/>
            <person name="Tapia R."/>
            <person name="Gilna P."/>
            <person name="Schmutz J."/>
            <person name="Larimer F."/>
            <person name="Land M."/>
            <person name="Hauser L."/>
            <person name="Kyrpides N."/>
            <person name="Mikhailova N."/>
            <person name="Miller C.D."/>
            <person name="Richardson P."/>
        </authorList>
    </citation>
    <scope>NUCLEOTIDE SEQUENCE [LARGE SCALE GENOMIC DNA]</scope>
    <source>
        <strain>KMS</strain>
    </source>
</reference>
<protein>
    <recommendedName>
        <fullName evidence="1">Adenosine deaminase</fullName>
        <ecNumber evidence="1">3.5.4.4</ecNumber>
    </recommendedName>
    <alternativeName>
        <fullName evidence="1">Adenosine aminohydrolase</fullName>
    </alternativeName>
</protein>
<evidence type="ECO:0000255" key="1">
    <source>
        <dbReference type="HAMAP-Rule" id="MF_00540"/>
    </source>
</evidence>
<sequence>MTTPLTLENISQAPKALLHDHLDGGLRPSTVLELAGQYGYDDLPADDVDELATFFRTAAHSGSLVRYLEPFAHTVGVMQTAEALHRVAFECVEDLAGDNVVYAEVRFAPELHIEGGMGLDAVVDAVLAGFADGEKAAASAGRTITVRCLVTAMRHAARSREIAELAIRFRDRGVVGFDIAGAEAGYPPTRHLDAFEYMRGNNARFTIHAGEAFGLPSIHEAIAFCGADRLGHGVRIVDDITVAPDGQVKLGRLAAILRDKRIPLELCPSSNVQTGAVASIAEHPFDLLARTRFRVTVNTDNRLMSDTSMSQEMLRLVEAFGYGWSDLARFTINAMKSSFIPFDERLALIDDVIKPRYAVLAG</sequence>
<accession>A1UCA4</accession>
<organism>
    <name type="scientific">Mycobacterium sp. (strain KMS)</name>
    <dbReference type="NCBI Taxonomy" id="189918"/>
    <lineage>
        <taxon>Bacteria</taxon>
        <taxon>Bacillati</taxon>
        <taxon>Actinomycetota</taxon>
        <taxon>Actinomycetes</taxon>
        <taxon>Mycobacteriales</taxon>
        <taxon>Mycobacteriaceae</taxon>
        <taxon>Mycobacterium</taxon>
    </lineage>
</organism>